<reference key="1">
    <citation type="journal article" date="2009" name="J. Bacteriol.">
        <title>Genomic sequencing reveals regulatory mutations and recombinational events in the widely used MC4100 lineage of Escherichia coli K-12.</title>
        <authorList>
            <person name="Ferenci T."/>
            <person name="Zhou Z."/>
            <person name="Betteridge T."/>
            <person name="Ren Y."/>
            <person name="Liu Y."/>
            <person name="Feng L."/>
            <person name="Reeves P.R."/>
            <person name="Wang L."/>
        </authorList>
    </citation>
    <scope>NUCLEOTIDE SEQUENCE [LARGE SCALE GENOMIC DNA]</scope>
    <source>
        <strain>K12 / MC4100 / BW2952</strain>
    </source>
</reference>
<keyword id="KW-0963">Cytoplasm</keyword>
<keyword id="KW-0276">Fatty acid metabolism</keyword>
<keyword id="KW-0413">Isomerase</keyword>
<keyword id="KW-0442">Lipid degradation</keyword>
<keyword id="KW-0443">Lipid metabolism</keyword>
<keyword id="KW-0456">Lyase</keyword>
<keyword id="KW-0511">Multifunctional enzyme</keyword>
<keyword id="KW-0520">NAD</keyword>
<keyword id="KW-0560">Oxidoreductase</keyword>
<dbReference type="EC" id="4.2.1.17" evidence="1"/>
<dbReference type="EC" id="5.1.2.3" evidence="1"/>
<dbReference type="EC" id="1.1.1.35" evidence="1"/>
<dbReference type="EMBL" id="CP001396">
    <property type="protein sequence ID" value="ACR63188.1"/>
    <property type="molecule type" value="Genomic_DNA"/>
</dbReference>
<dbReference type="RefSeq" id="WP_000426176.1">
    <property type="nucleotide sequence ID" value="NC_012759.1"/>
</dbReference>
<dbReference type="SMR" id="C4ZVN2"/>
<dbReference type="KEGG" id="ebw:BWG_2113"/>
<dbReference type="HOGENOM" id="CLU_009834_16_1_6"/>
<dbReference type="UniPathway" id="UPA00659"/>
<dbReference type="GO" id="GO:0005737">
    <property type="term" value="C:cytoplasm"/>
    <property type="evidence" value="ECO:0007669"/>
    <property type="project" value="UniProtKB-SubCell"/>
</dbReference>
<dbReference type="GO" id="GO:0008692">
    <property type="term" value="F:3-hydroxybutyryl-CoA epimerase activity"/>
    <property type="evidence" value="ECO:0007669"/>
    <property type="project" value="UniProtKB-UniRule"/>
</dbReference>
<dbReference type="GO" id="GO:0004300">
    <property type="term" value="F:enoyl-CoA hydratase activity"/>
    <property type="evidence" value="ECO:0007669"/>
    <property type="project" value="UniProtKB-UniRule"/>
</dbReference>
<dbReference type="GO" id="GO:0016509">
    <property type="term" value="F:long-chain-3-hydroxyacyl-CoA dehydrogenase activity"/>
    <property type="evidence" value="ECO:0007669"/>
    <property type="project" value="TreeGrafter"/>
</dbReference>
<dbReference type="GO" id="GO:0070403">
    <property type="term" value="F:NAD+ binding"/>
    <property type="evidence" value="ECO:0007669"/>
    <property type="project" value="InterPro"/>
</dbReference>
<dbReference type="GO" id="GO:0006635">
    <property type="term" value="P:fatty acid beta-oxidation"/>
    <property type="evidence" value="ECO:0007669"/>
    <property type="project" value="UniProtKB-UniRule"/>
</dbReference>
<dbReference type="CDD" id="cd06558">
    <property type="entry name" value="crotonase-like"/>
    <property type="match status" value="1"/>
</dbReference>
<dbReference type="FunFam" id="1.10.1040.50:FF:000003">
    <property type="entry name" value="Fatty acid oxidation complex subunit alpha"/>
    <property type="match status" value="1"/>
</dbReference>
<dbReference type="FunFam" id="3.90.226.10:FF:000011">
    <property type="entry name" value="Fatty acid oxidation complex subunit alpha"/>
    <property type="match status" value="1"/>
</dbReference>
<dbReference type="FunFam" id="3.40.50.720:FF:000009">
    <property type="entry name" value="Fatty oxidation complex, alpha subunit"/>
    <property type="match status" value="1"/>
</dbReference>
<dbReference type="Gene3D" id="1.10.1040.50">
    <property type="match status" value="1"/>
</dbReference>
<dbReference type="Gene3D" id="3.90.226.10">
    <property type="entry name" value="2-enoyl-CoA Hydratase, Chain A, domain 1"/>
    <property type="match status" value="1"/>
</dbReference>
<dbReference type="Gene3D" id="3.40.50.720">
    <property type="entry name" value="NAD(P)-binding Rossmann-like Domain"/>
    <property type="match status" value="1"/>
</dbReference>
<dbReference type="HAMAP" id="MF_01617">
    <property type="entry name" value="FadJ"/>
    <property type="match status" value="1"/>
</dbReference>
<dbReference type="InterPro" id="IPR006180">
    <property type="entry name" value="3-OHacyl-CoA_DH_CS"/>
</dbReference>
<dbReference type="InterPro" id="IPR006176">
    <property type="entry name" value="3-OHacyl-CoA_DH_NAD-bd"/>
</dbReference>
<dbReference type="InterPro" id="IPR006108">
    <property type="entry name" value="3HC_DH_C"/>
</dbReference>
<dbReference type="InterPro" id="IPR008927">
    <property type="entry name" value="6-PGluconate_DH-like_C_sf"/>
</dbReference>
<dbReference type="InterPro" id="IPR029045">
    <property type="entry name" value="ClpP/crotonase-like_dom_sf"/>
</dbReference>
<dbReference type="InterPro" id="IPR001753">
    <property type="entry name" value="Enoyl-CoA_hydra/iso"/>
</dbReference>
<dbReference type="InterPro" id="IPR050136">
    <property type="entry name" value="FA_oxidation_alpha_subunit"/>
</dbReference>
<dbReference type="InterPro" id="IPR012802">
    <property type="entry name" value="FadJ"/>
</dbReference>
<dbReference type="InterPro" id="IPR036291">
    <property type="entry name" value="NAD(P)-bd_dom_sf"/>
</dbReference>
<dbReference type="NCBIfam" id="TIGR02440">
    <property type="entry name" value="FadJ"/>
    <property type="match status" value="1"/>
</dbReference>
<dbReference type="NCBIfam" id="NF008363">
    <property type="entry name" value="PRK11154.1"/>
    <property type="match status" value="1"/>
</dbReference>
<dbReference type="PANTHER" id="PTHR43612">
    <property type="entry name" value="TRIFUNCTIONAL ENZYME SUBUNIT ALPHA"/>
    <property type="match status" value="1"/>
</dbReference>
<dbReference type="PANTHER" id="PTHR43612:SF3">
    <property type="entry name" value="TRIFUNCTIONAL ENZYME SUBUNIT ALPHA, MITOCHONDRIAL"/>
    <property type="match status" value="1"/>
</dbReference>
<dbReference type="Pfam" id="PF00725">
    <property type="entry name" value="3HCDH"/>
    <property type="match status" value="2"/>
</dbReference>
<dbReference type="Pfam" id="PF02737">
    <property type="entry name" value="3HCDH_N"/>
    <property type="match status" value="1"/>
</dbReference>
<dbReference type="Pfam" id="PF00378">
    <property type="entry name" value="ECH_1"/>
    <property type="match status" value="1"/>
</dbReference>
<dbReference type="SUPFAM" id="SSF48179">
    <property type="entry name" value="6-phosphogluconate dehydrogenase C-terminal domain-like"/>
    <property type="match status" value="2"/>
</dbReference>
<dbReference type="SUPFAM" id="SSF52096">
    <property type="entry name" value="ClpP/crotonase"/>
    <property type="match status" value="1"/>
</dbReference>
<dbReference type="SUPFAM" id="SSF51735">
    <property type="entry name" value="NAD(P)-binding Rossmann-fold domains"/>
    <property type="match status" value="1"/>
</dbReference>
<dbReference type="PROSITE" id="PS00067">
    <property type="entry name" value="3HCDH"/>
    <property type="match status" value="1"/>
</dbReference>
<gene>
    <name evidence="1" type="primary">fadJ</name>
    <name type="ordered locus">BWG_2113</name>
</gene>
<proteinExistence type="inferred from homology"/>
<comment type="function">
    <text evidence="1">Catalyzes the formation of a hydroxyacyl-CoA by addition of water on enoyl-CoA. Also exhibits 3-hydroxyacyl-CoA epimerase and 3-hydroxyacyl-CoA dehydrogenase activities.</text>
</comment>
<comment type="catalytic activity">
    <reaction evidence="1">
        <text>a (3S)-3-hydroxyacyl-CoA = a (2E)-enoyl-CoA + H2O</text>
        <dbReference type="Rhea" id="RHEA:16105"/>
        <dbReference type="ChEBI" id="CHEBI:15377"/>
        <dbReference type="ChEBI" id="CHEBI:57318"/>
        <dbReference type="ChEBI" id="CHEBI:58856"/>
        <dbReference type="EC" id="4.2.1.17"/>
    </reaction>
</comment>
<comment type="catalytic activity">
    <reaction evidence="1">
        <text>a 4-saturated-(3S)-3-hydroxyacyl-CoA = a (3E)-enoyl-CoA + H2O</text>
        <dbReference type="Rhea" id="RHEA:20724"/>
        <dbReference type="ChEBI" id="CHEBI:15377"/>
        <dbReference type="ChEBI" id="CHEBI:58521"/>
        <dbReference type="ChEBI" id="CHEBI:137480"/>
        <dbReference type="EC" id="4.2.1.17"/>
    </reaction>
</comment>
<comment type="catalytic activity">
    <reaction evidence="1">
        <text>a (3S)-3-hydroxyacyl-CoA + NAD(+) = a 3-oxoacyl-CoA + NADH + H(+)</text>
        <dbReference type="Rhea" id="RHEA:22432"/>
        <dbReference type="ChEBI" id="CHEBI:15378"/>
        <dbReference type="ChEBI" id="CHEBI:57318"/>
        <dbReference type="ChEBI" id="CHEBI:57540"/>
        <dbReference type="ChEBI" id="CHEBI:57945"/>
        <dbReference type="ChEBI" id="CHEBI:90726"/>
        <dbReference type="EC" id="1.1.1.35"/>
    </reaction>
</comment>
<comment type="catalytic activity">
    <reaction evidence="1">
        <text>(3S)-3-hydroxybutanoyl-CoA = (3R)-3-hydroxybutanoyl-CoA</text>
        <dbReference type="Rhea" id="RHEA:21760"/>
        <dbReference type="ChEBI" id="CHEBI:57315"/>
        <dbReference type="ChEBI" id="CHEBI:57316"/>
        <dbReference type="EC" id="5.1.2.3"/>
    </reaction>
</comment>
<comment type="pathway">
    <text evidence="1">Lipid metabolism; fatty acid beta-oxidation.</text>
</comment>
<comment type="subunit">
    <text evidence="1">Heterotetramer of two alpha chains (FadJ) and two beta chains (FadI).</text>
</comment>
<comment type="subcellular location">
    <subcellularLocation>
        <location evidence="1">Cytoplasm</location>
    </subcellularLocation>
</comment>
<comment type="similarity">
    <text evidence="1">In the N-terminal section; belongs to the enoyl-CoA hydratase/isomerase family.</text>
</comment>
<comment type="similarity">
    <text evidence="1">In the central section; belongs to the 3-hydroxyacyl-CoA dehydrogenase family.</text>
</comment>
<accession>C4ZVN2</accession>
<organism>
    <name type="scientific">Escherichia coli (strain K12 / MC4100 / BW2952)</name>
    <dbReference type="NCBI Taxonomy" id="595496"/>
    <lineage>
        <taxon>Bacteria</taxon>
        <taxon>Pseudomonadati</taxon>
        <taxon>Pseudomonadota</taxon>
        <taxon>Gammaproteobacteria</taxon>
        <taxon>Enterobacterales</taxon>
        <taxon>Enterobacteriaceae</taxon>
        <taxon>Escherichia</taxon>
    </lineage>
</organism>
<name>FADJ_ECOBW</name>
<feature type="chain" id="PRO_1000215730" description="Fatty acid oxidation complex subunit alpha">
    <location>
        <begin position="1"/>
        <end position="714"/>
    </location>
</feature>
<feature type="region of interest" description="Enoyl-CoA hydratase" evidence="1">
    <location>
        <begin position="1"/>
        <end position="190"/>
    </location>
</feature>
<feature type="region of interest" description="3-hydroxyacyl-CoA dehydrogenase" evidence="1">
    <location>
        <begin position="306"/>
        <end position="714"/>
    </location>
</feature>
<feature type="site" description="Important for catalytic activity" evidence="1">
    <location>
        <position position="118"/>
    </location>
</feature>
<feature type="site" description="Important for catalytic activity" evidence="1">
    <location>
        <position position="140"/>
    </location>
</feature>
<evidence type="ECO:0000255" key="1">
    <source>
        <dbReference type="HAMAP-Rule" id="MF_01617"/>
    </source>
</evidence>
<protein>
    <recommendedName>
        <fullName evidence="1">Fatty acid oxidation complex subunit alpha</fullName>
    </recommendedName>
    <domain>
        <recommendedName>
            <fullName evidence="1">Enoyl-CoA hydratase/3-hydroxybutyryl-CoA epimerase</fullName>
            <ecNumber evidence="1">4.2.1.17</ecNumber>
            <ecNumber evidence="1">5.1.2.3</ecNumber>
        </recommendedName>
    </domain>
    <domain>
        <recommendedName>
            <fullName evidence="1">3-hydroxyacyl-CoA dehydrogenase</fullName>
            <ecNumber evidence="1">1.1.1.35</ecNumber>
        </recommendedName>
    </domain>
</protein>
<sequence length="714" mass="77072">MEMTSAFTLNVRLDNIAVITIDVPGEKMNTLKAEFASQVRAIIKQLRENKELRGVVFVSAKPDNFIAGADINMIGNCKTAQEAEALARQGQQLMAEIHALPIQVIAAIHGACLGGGLELALACHGRVCTDDPKTVLGLPEVQLGLLPGSGGTQRLPRLIGVSTALEMILTGKQLRAKQALKLGLVDDVVPHSILLEAAVELAKKERPSSRPLPVRERILAGPLGRALLFKMVGKKTEHKTQGNYPATERILEVVETGLAQGTSSGYDAEARAFGELAMTPQSQALRSIFFASTDVKKDPGSDAPPAPLNSVGILGGGLMGGGIAYVTACKAGIPVRIKDINPQGINHALKYSWDQLEGKVRRRHLKASERDKQLALISGTTDYRGFAHRDLIIEAVFENLELKQQMVAEVEQNCAAHTIFASNTSSLPIGDIAAHATRPEQVIGLHFFSPVEKMPLVEIIPHAGTSAQTIATTVKLAKKQGKTPIVVRDKAGFYVNRILAPYINEAIRMLTQGERVEHIDAALVKFGFPVGPIQLLDEVGIDTGTKIIPVLEAAYGERFSAPANVVSSILNDDRKGRKNGRGFYLYGQKGRKSKKQVDPAIYPLIGTQGQGRISAPQVAERCVMLMLNEAVRCVDEQVIRSVRDGDIGAVFGIGFPPFLGGPFRYIDSLGAGEVVAIMQRLATQYGSRFTPCERLVEMGARGESFWKTTATDLQ</sequence>